<accession>B2HME9</accession>
<reference key="1">
    <citation type="journal article" date="2008" name="Genome Res.">
        <title>Insights from the complete genome sequence of Mycobacterium marinum on the evolution of Mycobacterium tuberculosis.</title>
        <authorList>
            <person name="Stinear T.P."/>
            <person name="Seemann T."/>
            <person name="Harrison P.F."/>
            <person name="Jenkin G.A."/>
            <person name="Davies J.K."/>
            <person name="Johnson P.D."/>
            <person name="Abdellah Z."/>
            <person name="Arrowsmith C."/>
            <person name="Chillingworth T."/>
            <person name="Churcher C."/>
            <person name="Clarke K."/>
            <person name="Cronin A."/>
            <person name="Davis P."/>
            <person name="Goodhead I."/>
            <person name="Holroyd N."/>
            <person name="Jagels K."/>
            <person name="Lord A."/>
            <person name="Moule S."/>
            <person name="Mungall K."/>
            <person name="Norbertczak H."/>
            <person name="Quail M.A."/>
            <person name="Rabbinowitsch E."/>
            <person name="Walker D."/>
            <person name="White B."/>
            <person name="Whitehead S."/>
            <person name="Small P.L."/>
            <person name="Brosch R."/>
            <person name="Ramakrishnan L."/>
            <person name="Fischbach M.A."/>
            <person name="Parkhill J."/>
            <person name="Cole S.T."/>
        </authorList>
    </citation>
    <scope>NUCLEOTIDE SEQUENCE [LARGE SCALE GENOMIC DNA]</scope>
    <source>
        <strain>ATCC BAA-535 / M</strain>
    </source>
</reference>
<name>PROA_MYCMM</name>
<proteinExistence type="inferred from homology"/>
<gene>
    <name evidence="1" type="primary">proA</name>
    <name type="ordered locus">MMAR_3753</name>
</gene>
<comment type="function">
    <text evidence="1">Catalyzes the NADPH-dependent reduction of L-glutamate 5-phosphate into L-glutamate 5-semialdehyde and phosphate. The product spontaneously undergoes cyclization to form 1-pyrroline-5-carboxylate.</text>
</comment>
<comment type="catalytic activity">
    <reaction evidence="1">
        <text>L-glutamate 5-semialdehyde + phosphate + NADP(+) = L-glutamyl 5-phosphate + NADPH + H(+)</text>
        <dbReference type="Rhea" id="RHEA:19541"/>
        <dbReference type="ChEBI" id="CHEBI:15378"/>
        <dbReference type="ChEBI" id="CHEBI:43474"/>
        <dbReference type="ChEBI" id="CHEBI:57783"/>
        <dbReference type="ChEBI" id="CHEBI:58066"/>
        <dbReference type="ChEBI" id="CHEBI:58274"/>
        <dbReference type="ChEBI" id="CHEBI:58349"/>
        <dbReference type="EC" id="1.2.1.41"/>
    </reaction>
</comment>
<comment type="pathway">
    <text evidence="1">Amino-acid biosynthesis; L-proline biosynthesis; L-glutamate 5-semialdehyde from L-glutamate: step 2/2.</text>
</comment>
<comment type="subcellular location">
    <subcellularLocation>
        <location evidence="1">Cytoplasm</location>
    </subcellularLocation>
</comment>
<comment type="similarity">
    <text evidence="1">Belongs to the gamma-glutamyl phosphate reductase family.</text>
</comment>
<protein>
    <recommendedName>
        <fullName evidence="1">Gamma-glutamyl phosphate reductase</fullName>
        <shortName evidence="1">GPR</shortName>
        <ecNumber evidence="1">1.2.1.41</ecNumber>
    </recommendedName>
    <alternativeName>
        <fullName evidence="1">Glutamate-5-semialdehyde dehydrogenase</fullName>
    </alternativeName>
    <alternativeName>
        <fullName evidence="1">Glutamyl-gamma-semialdehyde dehydrogenase</fullName>
        <shortName evidence="1">GSA dehydrogenase</shortName>
    </alternativeName>
</protein>
<organism>
    <name type="scientific">Mycobacterium marinum (strain ATCC BAA-535 / M)</name>
    <dbReference type="NCBI Taxonomy" id="216594"/>
    <lineage>
        <taxon>Bacteria</taxon>
        <taxon>Bacillati</taxon>
        <taxon>Actinomycetota</taxon>
        <taxon>Actinomycetes</taxon>
        <taxon>Mycobacteriales</taxon>
        <taxon>Mycobacteriaceae</taxon>
        <taxon>Mycobacterium</taxon>
        <taxon>Mycobacterium ulcerans group</taxon>
    </lineage>
</organism>
<evidence type="ECO:0000255" key="1">
    <source>
        <dbReference type="HAMAP-Rule" id="MF_00412"/>
    </source>
</evidence>
<evidence type="ECO:0000256" key="2">
    <source>
        <dbReference type="SAM" id="MobiDB-lite"/>
    </source>
</evidence>
<sequence>MTLQAAPRSAAAQQREPDLRQEVHDAARRARVAARLLAVVPTGVKDRALHAAADAILAHVDRILSANAEDLDAARAADTPAAMLDRLALNPQRVDGIAAGLRQVAGLPDPVGEVLRGYTLPNGLQLRQQRVPLGVVGMIYEGRPNVTVDAFGLTLKSGNAALLRGSSSAARSNEALVNVLRSALDSEQLPADAVQLLSSADRSTVTHLIQARGLVDVAIPRGGAGLIDAVVRDAQVPTIETGVGNCHVYVHEAADLDVAERILLNSKTRRPSVCNAAETLLVDAAIAEHAMPRLIGALQDAGVTVHLDADEQDLRREYLAMEIAVAVVDGVDGAIAHINEYGTGHTEAIVTTNLAAAQRFTERIDAAAVMVNASTAFTDGEQFGFGAEIGISTQKLHARGPMGLPELTSTKWIVWGEGHTRPA</sequence>
<feature type="chain" id="PRO_1000193628" description="Gamma-glutamyl phosphate reductase">
    <location>
        <begin position="1"/>
        <end position="423"/>
    </location>
</feature>
<feature type="region of interest" description="Disordered" evidence="2">
    <location>
        <begin position="1"/>
        <end position="25"/>
    </location>
</feature>
<feature type="compositionally biased region" description="Low complexity" evidence="2">
    <location>
        <begin position="1"/>
        <end position="14"/>
    </location>
</feature>
<feature type="compositionally biased region" description="Basic and acidic residues" evidence="2">
    <location>
        <begin position="15"/>
        <end position="25"/>
    </location>
</feature>
<dbReference type="EC" id="1.2.1.41" evidence="1"/>
<dbReference type="EMBL" id="CP000854">
    <property type="protein sequence ID" value="ACC42169.1"/>
    <property type="molecule type" value="Genomic_DNA"/>
</dbReference>
<dbReference type="RefSeq" id="WP_012395362.1">
    <property type="nucleotide sequence ID" value="NC_010612.1"/>
</dbReference>
<dbReference type="SMR" id="B2HME9"/>
<dbReference type="STRING" id="216594.MMAR_3753"/>
<dbReference type="KEGG" id="mmi:MMAR_3753"/>
<dbReference type="eggNOG" id="COG0014">
    <property type="taxonomic scope" value="Bacteria"/>
</dbReference>
<dbReference type="HOGENOM" id="CLU_030231_0_0_11"/>
<dbReference type="OrthoDB" id="9809970at2"/>
<dbReference type="UniPathway" id="UPA00098">
    <property type="reaction ID" value="UER00360"/>
</dbReference>
<dbReference type="Proteomes" id="UP000001190">
    <property type="component" value="Chromosome"/>
</dbReference>
<dbReference type="GO" id="GO:0005737">
    <property type="term" value="C:cytoplasm"/>
    <property type="evidence" value="ECO:0007669"/>
    <property type="project" value="UniProtKB-SubCell"/>
</dbReference>
<dbReference type="GO" id="GO:0004350">
    <property type="term" value="F:glutamate-5-semialdehyde dehydrogenase activity"/>
    <property type="evidence" value="ECO:0007669"/>
    <property type="project" value="UniProtKB-UniRule"/>
</dbReference>
<dbReference type="GO" id="GO:0050661">
    <property type="term" value="F:NADP binding"/>
    <property type="evidence" value="ECO:0007669"/>
    <property type="project" value="InterPro"/>
</dbReference>
<dbReference type="GO" id="GO:0055129">
    <property type="term" value="P:L-proline biosynthetic process"/>
    <property type="evidence" value="ECO:0007669"/>
    <property type="project" value="UniProtKB-UniRule"/>
</dbReference>
<dbReference type="CDD" id="cd07079">
    <property type="entry name" value="ALDH_F18-19_ProA-GPR"/>
    <property type="match status" value="1"/>
</dbReference>
<dbReference type="FunFam" id="3.40.309.10:FF:000006">
    <property type="entry name" value="Gamma-glutamyl phosphate reductase"/>
    <property type="match status" value="1"/>
</dbReference>
<dbReference type="Gene3D" id="3.40.605.10">
    <property type="entry name" value="Aldehyde Dehydrogenase, Chain A, domain 1"/>
    <property type="match status" value="1"/>
</dbReference>
<dbReference type="Gene3D" id="3.40.309.10">
    <property type="entry name" value="Aldehyde Dehydrogenase, Chain A, domain 2"/>
    <property type="match status" value="1"/>
</dbReference>
<dbReference type="HAMAP" id="MF_00412">
    <property type="entry name" value="ProA"/>
    <property type="match status" value="1"/>
</dbReference>
<dbReference type="InterPro" id="IPR016161">
    <property type="entry name" value="Ald_DH/histidinol_DH"/>
</dbReference>
<dbReference type="InterPro" id="IPR016163">
    <property type="entry name" value="Ald_DH_C"/>
</dbReference>
<dbReference type="InterPro" id="IPR016162">
    <property type="entry name" value="Ald_DH_N"/>
</dbReference>
<dbReference type="InterPro" id="IPR015590">
    <property type="entry name" value="Aldehyde_DH_dom"/>
</dbReference>
<dbReference type="InterPro" id="IPR020593">
    <property type="entry name" value="G-glutamylP_reductase_CS"/>
</dbReference>
<dbReference type="InterPro" id="IPR012134">
    <property type="entry name" value="Glu-5-SA_DH"/>
</dbReference>
<dbReference type="InterPro" id="IPR000965">
    <property type="entry name" value="GPR_dom"/>
</dbReference>
<dbReference type="NCBIfam" id="NF001221">
    <property type="entry name" value="PRK00197.1"/>
    <property type="match status" value="1"/>
</dbReference>
<dbReference type="NCBIfam" id="TIGR00407">
    <property type="entry name" value="proA"/>
    <property type="match status" value="1"/>
</dbReference>
<dbReference type="PANTHER" id="PTHR11063:SF8">
    <property type="entry name" value="DELTA-1-PYRROLINE-5-CARBOXYLATE SYNTHASE"/>
    <property type="match status" value="1"/>
</dbReference>
<dbReference type="PANTHER" id="PTHR11063">
    <property type="entry name" value="GLUTAMATE SEMIALDEHYDE DEHYDROGENASE"/>
    <property type="match status" value="1"/>
</dbReference>
<dbReference type="Pfam" id="PF00171">
    <property type="entry name" value="Aldedh"/>
    <property type="match status" value="2"/>
</dbReference>
<dbReference type="PIRSF" id="PIRSF000151">
    <property type="entry name" value="GPR"/>
    <property type="match status" value="1"/>
</dbReference>
<dbReference type="SUPFAM" id="SSF53720">
    <property type="entry name" value="ALDH-like"/>
    <property type="match status" value="1"/>
</dbReference>
<dbReference type="PROSITE" id="PS01223">
    <property type="entry name" value="PROA"/>
    <property type="match status" value="1"/>
</dbReference>
<keyword id="KW-0028">Amino-acid biosynthesis</keyword>
<keyword id="KW-0963">Cytoplasm</keyword>
<keyword id="KW-0521">NADP</keyword>
<keyword id="KW-0560">Oxidoreductase</keyword>
<keyword id="KW-0641">Proline biosynthesis</keyword>
<keyword id="KW-1185">Reference proteome</keyword>